<proteinExistence type="inferred from homology"/>
<name>GCSPB_HALH5</name>
<sequence>MMNKDQALIFELSKPGRVGHSLPELDVLEQPVETLIPAEFLREEAPELPEVSELQLMRHYTALSKRNHGVDSGFYPLGSCTMKYNPKINEDVARYPGFANIHPYQPEAQVQGALRLMYELQTALAEITGMDEVTLQPAAGAQGEWTGLMLIRAYHEANGDTNRTKVIVPDSAHGTNPASATVAGFESVTVRTDEDGLVDLDHLREVVGEDTAALMLTNPNTLGLFEAHIVEMAAIIHEAGGKLYYDGANSNAILGIARPGDMGFDVVHLNLHKTFTGPHGGGGPGSGPVGVKKELIPYLPKPVVVKDGDSYRLDYDRPHSIGRVKPYYGNFGINVRAYTYIRTMGPEGLRTVSEYAVLNANYMMRRLAPYFDLPYDQHCKHEFVLSGRQQKKLGVRTLDIAKRLLDFGYHPPTIYFPLNVEECLMIEPTETESKETLDEFIEAMIQIAKEAEETPEVVQEAPHHTVIGRLDETTAARKPILRYEKITQ</sequence>
<organism>
    <name type="scientific">Halalkalibacterium halodurans (strain ATCC BAA-125 / DSM 18197 / FERM 7344 / JCM 9153 / C-125)</name>
    <name type="common">Bacillus halodurans</name>
    <dbReference type="NCBI Taxonomy" id="272558"/>
    <lineage>
        <taxon>Bacteria</taxon>
        <taxon>Bacillati</taxon>
        <taxon>Bacillota</taxon>
        <taxon>Bacilli</taxon>
        <taxon>Bacillales</taxon>
        <taxon>Bacillaceae</taxon>
        <taxon>Halalkalibacterium (ex Joshi et al. 2022)</taxon>
    </lineage>
</organism>
<reference key="1">
    <citation type="journal article" date="2000" name="Nucleic Acids Res.">
        <title>Complete genome sequence of the alkaliphilic bacterium Bacillus halodurans and genomic sequence comparison with Bacillus subtilis.</title>
        <authorList>
            <person name="Takami H."/>
            <person name="Nakasone K."/>
            <person name="Takaki Y."/>
            <person name="Maeno G."/>
            <person name="Sasaki R."/>
            <person name="Masui N."/>
            <person name="Fuji F."/>
            <person name="Hirama C."/>
            <person name="Nakamura Y."/>
            <person name="Ogasawara N."/>
            <person name="Kuhara S."/>
            <person name="Horikoshi K."/>
        </authorList>
    </citation>
    <scope>NUCLEOTIDE SEQUENCE [LARGE SCALE GENOMIC DNA]</scope>
    <source>
        <strain>ATCC BAA-125 / DSM 18197 / FERM 7344 / JCM 9153 / C-125</strain>
    </source>
</reference>
<dbReference type="EC" id="1.4.4.2" evidence="1"/>
<dbReference type="EMBL" id="BA000004">
    <property type="protein sequence ID" value="BAB06533.1"/>
    <property type="molecule type" value="Genomic_DNA"/>
</dbReference>
<dbReference type="PIR" id="F84001">
    <property type="entry name" value="F84001"/>
</dbReference>
<dbReference type="RefSeq" id="WP_010898962.1">
    <property type="nucleotide sequence ID" value="NC_002570.2"/>
</dbReference>
<dbReference type="SMR" id="Q9K936"/>
<dbReference type="STRING" id="272558.gene:10728714"/>
<dbReference type="KEGG" id="bha:BH2814"/>
<dbReference type="eggNOG" id="COG1003">
    <property type="taxonomic scope" value="Bacteria"/>
</dbReference>
<dbReference type="HOGENOM" id="CLU_004620_5_0_9"/>
<dbReference type="OrthoDB" id="9801272at2"/>
<dbReference type="Proteomes" id="UP000001258">
    <property type="component" value="Chromosome"/>
</dbReference>
<dbReference type="GO" id="GO:0005829">
    <property type="term" value="C:cytosol"/>
    <property type="evidence" value="ECO:0007669"/>
    <property type="project" value="TreeGrafter"/>
</dbReference>
<dbReference type="GO" id="GO:0005960">
    <property type="term" value="C:glycine cleavage complex"/>
    <property type="evidence" value="ECO:0007669"/>
    <property type="project" value="TreeGrafter"/>
</dbReference>
<dbReference type="GO" id="GO:0016594">
    <property type="term" value="F:glycine binding"/>
    <property type="evidence" value="ECO:0007669"/>
    <property type="project" value="TreeGrafter"/>
</dbReference>
<dbReference type="GO" id="GO:0004375">
    <property type="term" value="F:glycine dehydrogenase (decarboxylating) activity"/>
    <property type="evidence" value="ECO:0007669"/>
    <property type="project" value="UniProtKB-EC"/>
</dbReference>
<dbReference type="GO" id="GO:0030170">
    <property type="term" value="F:pyridoxal phosphate binding"/>
    <property type="evidence" value="ECO:0007669"/>
    <property type="project" value="TreeGrafter"/>
</dbReference>
<dbReference type="GO" id="GO:0019464">
    <property type="term" value="P:glycine decarboxylation via glycine cleavage system"/>
    <property type="evidence" value="ECO:0007669"/>
    <property type="project" value="UniProtKB-UniRule"/>
</dbReference>
<dbReference type="CDD" id="cd00613">
    <property type="entry name" value="GDC-P"/>
    <property type="match status" value="1"/>
</dbReference>
<dbReference type="FunFam" id="3.40.640.10:FF:000034">
    <property type="entry name" value="Probable glycine dehydrogenase (decarboxylating) subunit 2"/>
    <property type="match status" value="1"/>
</dbReference>
<dbReference type="FunFam" id="3.90.1150.10:FF:000014">
    <property type="entry name" value="Probable glycine dehydrogenase (decarboxylating) subunit 2"/>
    <property type="match status" value="1"/>
</dbReference>
<dbReference type="Gene3D" id="6.20.440.10">
    <property type="match status" value="1"/>
</dbReference>
<dbReference type="Gene3D" id="3.90.1150.10">
    <property type="entry name" value="Aspartate Aminotransferase, domain 1"/>
    <property type="match status" value="1"/>
</dbReference>
<dbReference type="Gene3D" id="3.40.640.10">
    <property type="entry name" value="Type I PLP-dependent aspartate aminotransferase-like (Major domain)"/>
    <property type="match status" value="1"/>
</dbReference>
<dbReference type="HAMAP" id="MF_00713">
    <property type="entry name" value="GcvPB"/>
    <property type="match status" value="1"/>
</dbReference>
<dbReference type="InterPro" id="IPR023012">
    <property type="entry name" value="GcvPB"/>
</dbReference>
<dbReference type="InterPro" id="IPR049316">
    <property type="entry name" value="GDC-P_C"/>
</dbReference>
<dbReference type="InterPro" id="IPR049315">
    <property type="entry name" value="GDC-P_N"/>
</dbReference>
<dbReference type="InterPro" id="IPR020581">
    <property type="entry name" value="GDC_P"/>
</dbReference>
<dbReference type="InterPro" id="IPR015424">
    <property type="entry name" value="PyrdxlP-dep_Trfase"/>
</dbReference>
<dbReference type="InterPro" id="IPR015421">
    <property type="entry name" value="PyrdxlP-dep_Trfase_major"/>
</dbReference>
<dbReference type="InterPro" id="IPR015422">
    <property type="entry name" value="PyrdxlP-dep_Trfase_small"/>
</dbReference>
<dbReference type="NCBIfam" id="NF003346">
    <property type="entry name" value="PRK04366.1"/>
    <property type="match status" value="1"/>
</dbReference>
<dbReference type="PANTHER" id="PTHR11773:SF1">
    <property type="entry name" value="GLYCINE DEHYDROGENASE (DECARBOXYLATING), MITOCHONDRIAL"/>
    <property type="match status" value="1"/>
</dbReference>
<dbReference type="PANTHER" id="PTHR11773">
    <property type="entry name" value="GLYCINE DEHYDROGENASE, DECARBOXYLATING"/>
    <property type="match status" value="1"/>
</dbReference>
<dbReference type="Pfam" id="PF21478">
    <property type="entry name" value="GcvP2_C"/>
    <property type="match status" value="1"/>
</dbReference>
<dbReference type="Pfam" id="PF02347">
    <property type="entry name" value="GDC-P"/>
    <property type="match status" value="1"/>
</dbReference>
<dbReference type="SUPFAM" id="SSF53383">
    <property type="entry name" value="PLP-dependent transferases"/>
    <property type="match status" value="1"/>
</dbReference>
<keyword id="KW-0560">Oxidoreductase</keyword>
<keyword id="KW-0663">Pyridoxal phosphate</keyword>
<keyword id="KW-1185">Reference proteome</keyword>
<protein>
    <recommendedName>
        <fullName evidence="1">Probable glycine dehydrogenase (decarboxylating) subunit 2</fullName>
        <ecNumber evidence="1">1.4.4.2</ecNumber>
    </recommendedName>
    <alternativeName>
        <fullName evidence="1">Glycine cleavage system P-protein subunit 2</fullName>
    </alternativeName>
    <alternativeName>
        <fullName evidence="1">Glycine decarboxylase subunit 2</fullName>
    </alternativeName>
    <alternativeName>
        <fullName evidence="1">Glycine dehydrogenase (aminomethyl-transferring) subunit 2</fullName>
    </alternativeName>
</protein>
<comment type="function">
    <text evidence="1">The glycine cleavage system catalyzes the degradation of glycine. The P protein binds the alpha-amino group of glycine through its pyridoxal phosphate cofactor; CO(2) is released and the remaining methylamine moiety is then transferred to the lipoamide cofactor of the H protein.</text>
</comment>
<comment type="catalytic activity">
    <reaction evidence="1">
        <text>N(6)-[(R)-lipoyl]-L-lysyl-[glycine-cleavage complex H protein] + glycine + H(+) = N(6)-[(R)-S(8)-aminomethyldihydrolipoyl]-L-lysyl-[glycine-cleavage complex H protein] + CO2</text>
        <dbReference type="Rhea" id="RHEA:24304"/>
        <dbReference type="Rhea" id="RHEA-COMP:10494"/>
        <dbReference type="Rhea" id="RHEA-COMP:10495"/>
        <dbReference type="ChEBI" id="CHEBI:15378"/>
        <dbReference type="ChEBI" id="CHEBI:16526"/>
        <dbReference type="ChEBI" id="CHEBI:57305"/>
        <dbReference type="ChEBI" id="CHEBI:83099"/>
        <dbReference type="ChEBI" id="CHEBI:83143"/>
        <dbReference type="EC" id="1.4.4.2"/>
    </reaction>
</comment>
<comment type="cofactor">
    <cofactor evidence="1">
        <name>pyridoxal 5'-phosphate</name>
        <dbReference type="ChEBI" id="CHEBI:597326"/>
    </cofactor>
</comment>
<comment type="subunit">
    <text evidence="1">The glycine cleavage system is composed of four proteins: P, T, L and H. In this organism, the P 'protein' is a heterodimer of two subunits.</text>
</comment>
<comment type="similarity">
    <text evidence="1">Belongs to the GcvP family. C-terminal subunit subfamily.</text>
</comment>
<feature type="chain" id="PRO_0000166998" description="Probable glycine dehydrogenase (decarboxylating) subunit 2">
    <location>
        <begin position="1"/>
        <end position="488"/>
    </location>
</feature>
<feature type="modified residue" description="N6-(pyridoxal phosphate)lysine" evidence="1">
    <location>
        <position position="273"/>
    </location>
</feature>
<evidence type="ECO:0000255" key="1">
    <source>
        <dbReference type="HAMAP-Rule" id="MF_00713"/>
    </source>
</evidence>
<gene>
    <name evidence="1" type="primary">gcvPB</name>
    <name type="ordered locus">BH2814</name>
</gene>
<accession>Q9K936</accession>